<proteinExistence type="evidence at protein level"/>
<feature type="peptide" id="PRO_0000044202" description="Peptide hormone 1">
    <location>
        <begin position="1"/>
        <end position="18"/>
    </location>
</feature>
<name>PH1_PERAM</name>
<keyword id="KW-0903">Direct protein sequencing</keyword>
<keyword id="KW-0527">Neuropeptide</keyword>
<accession>P82694</accession>
<protein>
    <recommendedName>
        <fullName>Peptide hormone 1</fullName>
    </recommendedName>
    <alternativeName>
        <fullName>Pea-SKNacid</fullName>
    </alternativeName>
</protein>
<sequence>SDLTWTYQSPGDPTNSKN</sequence>
<dbReference type="GO" id="GO:0007218">
    <property type="term" value="P:neuropeptide signaling pathway"/>
    <property type="evidence" value="ECO:0007669"/>
    <property type="project" value="UniProtKB-KW"/>
</dbReference>
<organism>
    <name type="scientific">Periplaneta americana</name>
    <name type="common">American cockroach</name>
    <name type="synonym">Blatta americana</name>
    <dbReference type="NCBI Taxonomy" id="6978"/>
    <lineage>
        <taxon>Eukaryota</taxon>
        <taxon>Metazoa</taxon>
        <taxon>Ecdysozoa</taxon>
        <taxon>Arthropoda</taxon>
        <taxon>Hexapoda</taxon>
        <taxon>Insecta</taxon>
        <taxon>Pterygota</taxon>
        <taxon>Neoptera</taxon>
        <taxon>Polyneoptera</taxon>
        <taxon>Dictyoptera</taxon>
        <taxon>Blattodea</taxon>
        <taxon>Blattoidea</taxon>
        <taxon>Blattidae</taxon>
        <taxon>Blattinae</taxon>
        <taxon>Periplaneta</taxon>
    </lineage>
</organism>
<reference key="1">
    <citation type="journal article" date="1999" name="Ann. N. Y. Acad. Sci.">
        <title>The unique neuropeptide pattern in abdominal perisympathetic organs of insects.</title>
        <authorList>
            <person name="Predel R."/>
            <person name="Eckert M."/>
            <person name="Holman G.M."/>
        </authorList>
    </citation>
    <scope>PROTEIN SEQUENCE</scope>
    <source>
        <tissue>Abdominal perisympathetic organs</tissue>
    </source>
</reference>